<feature type="chain" id="PRO_0000440132" description="Pi-hexatoxin-Hi1b" evidence="5">
    <location>
        <begin position="1"/>
        <end position="75"/>
    </location>
</feature>
<feature type="repeat" description="Domain 1" evidence="1">
    <location>
        <begin position="3"/>
        <end position="33"/>
    </location>
</feature>
<feature type="repeat" description="Domain 2" evidence="1">
    <location>
        <begin position="40"/>
        <end position="71"/>
    </location>
</feature>
<feature type="region of interest" description="2 X approximate repeats with cysteine pattern C-C-CC-C-C" evidence="1">
    <location>
        <begin position="3"/>
        <end position="71"/>
    </location>
</feature>
<feature type="disulfide bond" evidence="1">
    <location>
        <begin position="3"/>
        <end position="18"/>
    </location>
</feature>
<feature type="disulfide bond" evidence="1">
    <location>
        <begin position="10"/>
        <end position="23"/>
    </location>
</feature>
<feature type="disulfide bond" evidence="1">
    <location>
        <begin position="17"/>
        <end position="33"/>
    </location>
</feature>
<feature type="disulfide bond" evidence="1">
    <location>
        <begin position="40"/>
        <end position="55"/>
    </location>
</feature>
<feature type="disulfide bond" evidence="1">
    <location>
        <begin position="47"/>
        <end position="60"/>
    </location>
</feature>
<feature type="disulfide bond" evidence="1">
    <location>
        <begin position="54"/>
        <end position="71"/>
    </location>
</feature>
<accession>P0DP46</accession>
<organism>
    <name type="scientific">Hadronyche infensa</name>
    <name type="common">Fraser island funnel-web spider</name>
    <name type="synonym">Atrax infensus</name>
    <dbReference type="NCBI Taxonomy" id="153481"/>
    <lineage>
        <taxon>Eukaryota</taxon>
        <taxon>Metazoa</taxon>
        <taxon>Ecdysozoa</taxon>
        <taxon>Arthropoda</taxon>
        <taxon>Chelicerata</taxon>
        <taxon>Arachnida</taxon>
        <taxon>Araneae</taxon>
        <taxon>Mygalomorphae</taxon>
        <taxon>Hexathelidae</taxon>
        <taxon>Hadronyche</taxon>
    </lineage>
</organism>
<reference key="1">
    <citation type="journal article" date="2017" name="Proc. Natl. Acad. Sci. U.S.A.">
        <title>Potent neuroprotection after stroke afforded by a double-knot spider-venom peptide that inhibits acid-sensing ion channel 1a.</title>
        <authorList>
            <person name="Chassagnon I.R."/>
            <person name="McCarthy C.A."/>
            <person name="Chin Y.K."/>
            <person name="Pineda S.S."/>
            <person name="Keramidas A."/>
            <person name="Mobli M."/>
            <person name="Pham V."/>
            <person name="De Silva T.M."/>
            <person name="Lynch J.W."/>
            <person name="Widdop R.E."/>
            <person name="Rash L.D."/>
            <person name="King G.F."/>
        </authorList>
    </citation>
    <scope>NUCLEOTIDE SEQUENCE [MRNA]</scope>
    <source>
        <tissue>Venom gland</tissue>
    </source>
</reference>
<evidence type="ECO:0000250" key="1">
    <source>
        <dbReference type="UniProtKB" id="A0A1L1QJU3"/>
    </source>
</evidence>
<evidence type="ECO:0000250" key="2">
    <source>
        <dbReference type="UniProtKB" id="P60514"/>
    </source>
</evidence>
<evidence type="ECO:0000303" key="3">
    <source>
    </source>
</evidence>
<evidence type="ECO:0000305" key="4"/>
<evidence type="ECO:0000305" key="5">
    <source>
    </source>
</evidence>
<keyword id="KW-1015">Disulfide bond</keyword>
<keyword id="KW-0872">Ion channel impairing toxin</keyword>
<keyword id="KW-1275">Proton-gated sodium channel impairing toxin</keyword>
<keyword id="KW-0677">Repeat</keyword>
<keyword id="KW-0964">Secreted</keyword>
<keyword id="KW-0800">Toxin</keyword>
<protein>
    <recommendedName>
        <fullName evidence="3">Pi-hexatoxin-Hi1b</fullName>
        <shortName evidence="3">Pi-HXTX-Hi1b</shortName>
    </recommendedName>
    <alternativeName>
        <fullName evidence="4">Double-knot toxin</fullName>
        <shortName evidence="4">DkTx</shortName>
    </alternativeName>
</protein>
<proteinExistence type="inferred from homology"/>
<dbReference type="SMR" id="P0DP46"/>
<dbReference type="GO" id="GO:0005576">
    <property type="term" value="C:extracellular region"/>
    <property type="evidence" value="ECO:0007669"/>
    <property type="project" value="UniProtKB-SubCell"/>
</dbReference>
<dbReference type="GO" id="GO:0099106">
    <property type="term" value="F:ion channel regulator activity"/>
    <property type="evidence" value="ECO:0007669"/>
    <property type="project" value="UniProtKB-KW"/>
</dbReference>
<dbReference type="GO" id="GO:0090729">
    <property type="term" value="F:toxin activity"/>
    <property type="evidence" value="ECO:0007669"/>
    <property type="project" value="UniProtKB-KW"/>
</dbReference>
<dbReference type="Gene3D" id="6.20.10.10">
    <property type="match status" value="2"/>
</dbReference>
<dbReference type="SUPFAM" id="SSF57059">
    <property type="entry name" value="omega toxin-like"/>
    <property type="match status" value="2"/>
</dbReference>
<name>TP1B_HADIN</name>
<sequence>NECIRKWLSCVDRKNDCCEGLECYKRRHSFEVCVPIPGFCLVKWKQCDGRERDCCPGLECWKRSGNKSSVCAPIT</sequence>
<comment type="function">
    <text evidence="1">This toxin potently and selectively inhibits ASIC1a, an isoform of the gene ASIC1. It incompletely inhibits ASIC1a activation in a pH-independent and slowly reversible manner. This toxin acts by binding to and stabilizing the closed state of the channel, thereby impeding the transition into a conducting state. This toxin may bind to the acidic pocket of ASIC1a, since mutation of a key residue of this pocket (Arg-350) abolishes the ability of the toxin to inhibit ASIC1a. In vivo, this toxin protects the brain from neuronal injury when administered up to 8 hours after stroke onset.</text>
</comment>
<comment type="subcellular location">
    <subcellularLocation>
        <location evidence="2">Secreted</location>
    </subcellularLocation>
</comment>
<comment type="tissue specificity">
    <text evidence="5">Expressed by the venom gland.</text>
</comment>
<comment type="domain">
    <text evidence="4">The presence of a 'disulfide through disulfide knot' structurally defines this protein as a knottin. This toxin contains 2 'disulfide through disulfide knots' that are separated by a short linker.</text>
</comment>
<comment type="similarity">
    <text evidence="4">Belongs to the psalmotoxin-1 family. Double-knot toxin subfamily.</text>
</comment>